<comment type="function">
    <text evidence="1">Component of the nascent polypeptide-associated complex (NAC), a dynamic component of the ribosomal exit tunnel, protecting the emerging polypeptides from interaction with other cytoplasmic proteins to ensure appropriate nascent protein targeting. The NAC complex also promotes mitochondrial protein import by enhancing productive ribosome interactions with the outer mitochondrial membrane and blocks the inappropriate interaction of ribosomes translating non-secretory nascent polypeptides with translocation sites in the membrane of the endoplasmic reticulum. Egd2 may also be involved in transcription regulation (By similarity).</text>
</comment>
<comment type="subunit">
    <text evidence="1">Part of the nascent polypeptide-associated complex (NAC), consisting of egd2 and egd1. NAC associates with ribosomes via egd1 (By similarity).</text>
</comment>
<comment type="subcellular location">
    <subcellularLocation>
        <location evidence="1">Cytoplasm</location>
    </subcellularLocation>
    <subcellularLocation>
        <location evidence="1">Nucleus</location>
    </subcellularLocation>
    <text evidence="1">Predominantly cytoplasmic, may also transiently localize to the nucleus.</text>
</comment>
<comment type="similarity">
    <text evidence="4">Belongs to the NAC-alpha family.</text>
</comment>
<name>NACA_ASPCL</name>
<reference key="1">
    <citation type="journal article" date="2008" name="PLoS Genet.">
        <title>Genomic islands in the pathogenic filamentous fungus Aspergillus fumigatus.</title>
        <authorList>
            <person name="Fedorova N.D."/>
            <person name="Khaldi N."/>
            <person name="Joardar V.S."/>
            <person name="Maiti R."/>
            <person name="Amedeo P."/>
            <person name="Anderson M.J."/>
            <person name="Crabtree J."/>
            <person name="Silva J.C."/>
            <person name="Badger J.H."/>
            <person name="Albarraq A."/>
            <person name="Angiuoli S."/>
            <person name="Bussey H."/>
            <person name="Bowyer P."/>
            <person name="Cotty P.J."/>
            <person name="Dyer P.S."/>
            <person name="Egan A."/>
            <person name="Galens K."/>
            <person name="Fraser-Liggett C.M."/>
            <person name="Haas B.J."/>
            <person name="Inman J.M."/>
            <person name="Kent R."/>
            <person name="Lemieux S."/>
            <person name="Malavazi I."/>
            <person name="Orvis J."/>
            <person name="Roemer T."/>
            <person name="Ronning C.M."/>
            <person name="Sundaram J.P."/>
            <person name="Sutton G."/>
            <person name="Turner G."/>
            <person name="Venter J.C."/>
            <person name="White O.R."/>
            <person name="Whitty B.R."/>
            <person name="Youngman P."/>
            <person name="Wolfe K.H."/>
            <person name="Goldman G.H."/>
            <person name="Wortman J.R."/>
            <person name="Jiang B."/>
            <person name="Denning D.W."/>
            <person name="Nierman W.C."/>
        </authorList>
    </citation>
    <scope>NUCLEOTIDE SEQUENCE [LARGE SCALE GENOMIC DNA]</scope>
    <source>
        <strain>ATCC 1007 / CBS 513.65 / DSM 816 / NCTC 3887 / NRRL 1 / QM 1276 / 107</strain>
    </source>
</reference>
<proteinExistence type="inferred from homology"/>
<feature type="chain" id="PRO_0000282680" description="Nascent polypeptide-associated complex subunit alpha">
    <location>
        <begin position="1"/>
        <end position="204"/>
    </location>
</feature>
<feature type="domain" description="NAC-A/B" evidence="2">
    <location>
        <begin position="46"/>
        <end position="111"/>
    </location>
</feature>
<feature type="domain" description="UBA">
    <location>
        <begin position="165"/>
        <end position="204"/>
    </location>
</feature>
<feature type="region of interest" description="Disordered" evidence="3">
    <location>
        <begin position="1"/>
        <end position="48"/>
    </location>
</feature>
<feature type="region of interest" description="Disordered" evidence="3">
    <location>
        <begin position="119"/>
        <end position="167"/>
    </location>
</feature>
<feature type="compositionally biased region" description="Basic and acidic residues" evidence="3">
    <location>
        <begin position="1"/>
        <end position="19"/>
    </location>
</feature>
<feature type="compositionally biased region" description="Acidic residues" evidence="3">
    <location>
        <begin position="22"/>
        <end position="32"/>
    </location>
</feature>
<feature type="compositionally biased region" description="Low complexity" evidence="3">
    <location>
        <begin position="119"/>
        <end position="128"/>
    </location>
</feature>
<feature type="compositionally biased region" description="Basic and acidic residues" evidence="3">
    <location>
        <begin position="129"/>
        <end position="151"/>
    </location>
</feature>
<feature type="compositionally biased region" description="Acidic residues" evidence="3">
    <location>
        <begin position="152"/>
        <end position="164"/>
    </location>
</feature>
<dbReference type="EMBL" id="DS027058">
    <property type="protein sequence ID" value="EAW08745.1"/>
    <property type="molecule type" value="Genomic_DNA"/>
</dbReference>
<dbReference type="RefSeq" id="XP_001270171.1">
    <property type="nucleotide sequence ID" value="XM_001270170.1"/>
</dbReference>
<dbReference type="SMR" id="A1CMF8"/>
<dbReference type="STRING" id="344612.A1CMF8"/>
<dbReference type="EnsemblFungi" id="EAW08745">
    <property type="protein sequence ID" value="EAW08745"/>
    <property type="gene ID" value="ACLA_096790"/>
</dbReference>
<dbReference type="GeneID" id="4702542"/>
<dbReference type="KEGG" id="act:ACLA_096790"/>
<dbReference type="VEuPathDB" id="FungiDB:ACLA_096790"/>
<dbReference type="eggNOG" id="KOG2239">
    <property type="taxonomic scope" value="Eukaryota"/>
</dbReference>
<dbReference type="HOGENOM" id="CLU_057806_2_0_1"/>
<dbReference type="OMA" id="SQKMIFA"/>
<dbReference type="OrthoDB" id="3169036at2759"/>
<dbReference type="Proteomes" id="UP000006701">
    <property type="component" value="Unassembled WGS sequence"/>
</dbReference>
<dbReference type="GO" id="GO:0005854">
    <property type="term" value="C:nascent polypeptide-associated complex"/>
    <property type="evidence" value="ECO:0007669"/>
    <property type="project" value="EnsemblFungi"/>
</dbReference>
<dbReference type="GO" id="GO:0005634">
    <property type="term" value="C:nucleus"/>
    <property type="evidence" value="ECO:0007669"/>
    <property type="project" value="UniProtKB-SubCell"/>
</dbReference>
<dbReference type="GO" id="GO:0015031">
    <property type="term" value="P:protein transport"/>
    <property type="evidence" value="ECO:0007669"/>
    <property type="project" value="UniProtKB-KW"/>
</dbReference>
<dbReference type="CDD" id="cd22054">
    <property type="entry name" value="NAC_NACA"/>
    <property type="match status" value="1"/>
</dbReference>
<dbReference type="CDD" id="cd14358">
    <property type="entry name" value="UBA_NAC_euk"/>
    <property type="match status" value="1"/>
</dbReference>
<dbReference type="FunFam" id="2.20.70.30:FF:000002">
    <property type="entry name" value="Nascent polypeptide-associated complex (NAC), alpha subunit"/>
    <property type="match status" value="1"/>
</dbReference>
<dbReference type="FunFam" id="1.10.8.10:FF:000006">
    <property type="entry name" value="Putative nascent polypeptide-associated complex subunit alpha"/>
    <property type="match status" value="1"/>
</dbReference>
<dbReference type="Gene3D" id="1.10.8.10">
    <property type="entry name" value="DNA helicase RuvA subunit, C-terminal domain"/>
    <property type="match status" value="1"/>
</dbReference>
<dbReference type="Gene3D" id="2.20.70.30">
    <property type="entry name" value="Nascent polypeptide-associated complex domain"/>
    <property type="match status" value="1"/>
</dbReference>
<dbReference type="InterPro" id="IPR016641">
    <property type="entry name" value="EGD2/NACA0like"/>
</dbReference>
<dbReference type="InterPro" id="IPR044034">
    <property type="entry name" value="NAC-like_UBA"/>
</dbReference>
<dbReference type="InterPro" id="IPR038187">
    <property type="entry name" value="NAC_A/B_dom_sf"/>
</dbReference>
<dbReference type="InterPro" id="IPR002715">
    <property type="entry name" value="Nas_poly-pep-assoc_cplx_dom"/>
</dbReference>
<dbReference type="PANTHER" id="PTHR21713">
    <property type="entry name" value="NASCENT POLYPEPTIDE ASSOCIATED COMPLEX ALPHA SUBUNIT-RELATED"/>
    <property type="match status" value="1"/>
</dbReference>
<dbReference type="Pfam" id="PF01849">
    <property type="entry name" value="NAC"/>
    <property type="match status" value="1"/>
</dbReference>
<dbReference type="Pfam" id="PF19026">
    <property type="entry name" value="UBA_HYPK"/>
    <property type="match status" value="1"/>
</dbReference>
<dbReference type="PIRSF" id="PIRSF015901">
    <property type="entry name" value="NAC_alpha"/>
    <property type="match status" value="1"/>
</dbReference>
<dbReference type="SMART" id="SM01407">
    <property type="entry name" value="NAC"/>
    <property type="match status" value="1"/>
</dbReference>
<dbReference type="PROSITE" id="PS51151">
    <property type="entry name" value="NAC_AB"/>
    <property type="match status" value="1"/>
</dbReference>
<protein>
    <recommendedName>
        <fullName>Nascent polypeptide-associated complex subunit alpha</fullName>
        <shortName>NAC-alpha</shortName>
    </recommendedName>
    <alternativeName>
        <fullName>Alpha-NAC</fullName>
    </alternativeName>
</protein>
<accession>A1CMF8</accession>
<sequence>MADPRVEELPDEEVPKTNVEDAGSDSESEAGEESSIPSGAAVTIHSRNEKKARKAIGKLGLKHVPGITRVTLRRPKNILFVINQPDVYRSPTSNTWIIFGEAKIEDLNSQAQASAAQQLAAAEAAAGEHAGHDHDHDHGKGKAPETEAKKEEEEDDGEEVDETGLEAKDIELVMAQANVSRKKAVKALRENDNDIVNSIMALSI</sequence>
<keyword id="KW-0963">Cytoplasm</keyword>
<keyword id="KW-0539">Nucleus</keyword>
<keyword id="KW-0653">Protein transport</keyword>
<keyword id="KW-1185">Reference proteome</keyword>
<keyword id="KW-0813">Transport</keyword>
<gene>
    <name type="primary">egd2</name>
    <name type="ORF">ACLA_096790</name>
</gene>
<organism>
    <name type="scientific">Aspergillus clavatus (strain ATCC 1007 / CBS 513.65 / DSM 816 / NCTC 3887 / NRRL 1 / QM 1276 / 107)</name>
    <dbReference type="NCBI Taxonomy" id="344612"/>
    <lineage>
        <taxon>Eukaryota</taxon>
        <taxon>Fungi</taxon>
        <taxon>Dikarya</taxon>
        <taxon>Ascomycota</taxon>
        <taxon>Pezizomycotina</taxon>
        <taxon>Eurotiomycetes</taxon>
        <taxon>Eurotiomycetidae</taxon>
        <taxon>Eurotiales</taxon>
        <taxon>Aspergillaceae</taxon>
        <taxon>Aspergillus</taxon>
        <taxon>Aspergillus subgen. Fumigati</taxon>
    </lineage>
</organism>
<evidence type="ECO:0000250" key="1"/>
<evidence type="ECO:0000255" key="2">
    <source>
        <dbReference type="PROSITE-ProRule" id="PRU00507"/>
    </source>
</evidence>
<evidence type="ECO:0000256" key="3">
    <source>
        <dbReference type="SAM" id="MobiDB-lite"/>
    </source>
</evidence>
<evidence type="ECO:0000305" key="4"/>